<dbReference type="EMBL" id="BC102886">
    <property type="protein sequence ID" value="AAI02887.1"/>
    <property type="molecule type" value="mRNA"/>
</dbReference>
<dbReference type="RefSeq" id="NP_001029931.2">
    <property type="nucleotide sequence ID" value="NM_001034759.2"/>
</dbReference>
<dbReference type="FunCoup" id="A8YXY3">
    <property type="interactions" value="2061"/>
</dbReference>
<dbReference type="STRING" id="9913.ENSBTAP00000071772"/>
<dbReference type="PeptideAtlas" id="A8YXY3"/>
<dbReference type="Ensembl" id="ENSBTAT00000072535.1">
    <property type="protein sequence ID" value="ENSBTAP00000071772.1"/>
    <property type="gene ID" value="ENSBTAG00000052268.2"/>
</dbReference>
<dbReference type="GeneID" id="614360"/>
<dbReference type="KEGG" id="bta:614360"/>
<dbReference type="CTD" id="9403"/>
<dbReference type="VEuPathDB" id="HostDB:ENSBTAG00000052268"/>
<dbReference type="VGNC" id="VGNC:109402">
    <property type="gene designation" value="SELENOF"/>
</dbReference>
<dbReference type="GeneTree" id="ENSGT00940000154284"/>
<dbReference type="InParanoid" id="A8YXY3"/>
<dbReference type="OMA" id="IKPHCKQ"/>
<dbReference type="OrthoDB" id="1910009at2759"/>
<dbReference type="Proteomes" id="UP000009136">
    <property type="component" value="Chromosome 3"/>
</dbReference>
<dbReference type="Bgee" id="ENSBTAG00000052268">
    <property type="expression patterns" value="Expressed in oocyte and 103 other cell types or tissues"/>
</dbReference>
<dbReference type="GO" id="GO:0005788">
    <property type="term" value="C:endoplasmic reticulum lumen"/>
    <property type="evidence" value="ECO:0000318"/>
    <property type="project" value="GO_Central"/>
</dbReference>
<dbReference type="GO" id="GO:0016491">
    <property type="term" value="F:oxidoreductase activity"/>
    <property type="evidence" value="ECO:0000318"/>
    <property type="project" value="GO_Central"/>
</dbReference>
<dbReference type="FunFam" id="3.40.30.50:FF:000001">
    <property type="entry name" value="15 kDa selenoprotein"/>
    <property type="match status" value="1"/>
</dbReference>
<dbReference type="Gene3D" id="3.40.30.50">
    <property type="entry name" value="Sep15/SelM thioredoxin-like domain, active-site redox motif"/>
    <property type="match status" value="1"/>
</dbReference>
<dbReference type="InterPro" id="IPR038219">
    <property type="entry name" value="Sep15/SelM_sf"/>
</dbReference>
<dbReference type="InterPro" id="IPR039992">
    <property type="entry name" value="Sep15_SelM"/>
</dbReference>
<dbReference type="InterPro" id="IPR014912">
    <property type="entry name" value="Sep15_SelM_dom"/>
</dbReference>
<dbReference type="InterPro" id="IPR036249">
    <property type="entry name" value="Thioredoxin-like_sf"/>
</dbReference>
<dbReference type="PANTHER" id="PTHR13077">
    <property type="entry name" value="SELENOPROTEIN F"/>
    <property type="match status" value="1"/>
</dbReference>
<dbReference type="PANTHER" id="PTHR13077:SF6">
    <property type="entry name" value="SELENOPROTEIN F"/>
    <property type="match status" value="1"/>
</dbReference>
<dbReference type="Pfam" id="PF08806">
    <property type="entry name" value="Sep15_SelM"/>
    <property type="match status" value="1"/>
</dbReference>
<dbReference type="SUPFAM" id="SSF52833">
    <property type="entry name" value="Thioredoxin-like"/>
    <property type="match status" value="1"/>
</dbReference>
<comment type="function">
    <text evidence="2 3">May be involved in redox reactions associated with the formation of disulfide bonds (By similarity). May contribute to the quality control of protein folding in the endoplasmic reticulum. May regulate protein folding by enhancing the catalytic activity of UGGT1/UGCGL1 and UGGT2/UGCGL2 (By similarity).</text>
</comment>
<comment type="subunit">
    <text evidence="2">Forms a tight complex with UGGT1/UGCGL1. Interacts with UGGT2/UGCGL2. Interacts with RDH11.</text>
</comment>
<comment type="subcellular location">
    <subcellularLocation>
        <location evidence="1">Endoplasmic reticulum lumen</location>
    </subcellularLocation>
    <text evidence="1">The association with UGGT1/UGCGL1 is essential for its retention in the endoplasmic reticulum.</text>
</comment>
<comment type="similarity">
    <text evidence="5">Belongs to the selenoprotein M/F family.</text>
</comment>
<sequence>MAARRDGWLGPAFGLRLLLATVLQTVSALGAEFSSESCRELGFSSNLLCSSCDLLGQFNLLQLDPDCRGCCQEEAQFETKKLYAGAILEVCGUKLGRFPQVQAFVRSDKPKLFKGLQIKYVRGSDPVLKLLDDSGNIAEELSILKWNTDSVEEFLSEKLERI</sequence>
<evidence type="ECO:0000250" key="1"/>
<evidence type="ECO:0000250" key="2">
    <source>
        <dbReference type="UniProtKB" id="O60613"/>
    </source>
</evidence>
<evidence type="ECO:0000250" key="3">
    <source>
        <dbReference type="UniProtKB" id="Q923V8"/>
    </source>
</evidence>
<evidence type="ECO:0000255" key="4"/>
<evidence type="ECO:0000305" key="5"/>
<keyword id="KW-0256">Endoplasmic reticulum</keyword>
<keyword id="KW-1185">Reference proteome</keyword>
<keyword id="KW-0712">Selenocysteine</keyword>
<keyword id="KW-0732">Signal</keyword>
<name>SEP15_BOVIN</name>
<reference key="1">
    <citation type="submission" date="2005-08" db="EMBL/GenBank/DDBJ databases">
        <authorList>
            <consortium name="NIH - Mammalian Gene Collection (MGC) project"/>
        </authorList>
    </citation>
    <scope>NUCLEOTIDE SEQUENCE [LARGE SCALE MRNA]</scope>
    <source>
        <strain>Crossbred X Angus</strain>
        <tissue>Ileum</tissue>
    </source>
</reference>
<gene>
    <name evidence="2" type="primary">SELENOF</name>
    <name evidence="2" type="synonym">SEP15</name>
</gene>
<feature type="signal peptide" evidence="4">
    <location>
        <begin position="1"/>
        <end position="28"/>
    </location>
</feature>
<feature type="chain" id="PRO_0000318609" description="Selenoprotein F">
    <location>
        <begin position="29"/>
        <end position="162"/>
    </location>
</feature>
<feature type="non-standard amino acid" description="Selenocysteine">
    <location>
        <position position="93"/>
    </location>
</feature>
<accession>A8YXY3</accession>
<organism>
    <name type="scientific">Bos taurus</name>
    <name type="common">Bovine</name>
    <dbReference type="NCBI Taxonomy" id="9913"/>
    <lineage>
        <taxon>Eukaryota</taxon>
        <taxon>Metazoa</taxon>
        <taxon>Chordata</taxon>
        <taxon>Craniata</taxon>
        <taxon>Vertebrata</taxon>
        <taxon>Euteleostomi</taxon>
        <taxon>Mammalia</taxon>
        <taxon>Eutheria</taxon>
        <taxon>Laurasiatheria</taxon>
        <taxon>Artiodactyla</taxon>
        <taxon>Ruminantia</taxon>
        <taxon>Pecora</taxon>
        <taxon>Bovidae</taxon>
        <taxon>Bovinae</taxon>
        <taxon>Bos</taxon>
    </lineage>
</organism>
<proteinExistence type="evidence at transcript level"/>
<protein>
    <recommendedName>
        <fullName evidence="2">Selenoprotein F</fullName>
    </recommendedName>
</protein>